<comment type="function">
    <text evidence="1">Serine protease inhibitor.</text>
</comment>
<comment type="subcellular location">
    <subcellularLocation>
        <location evidence="1">Secreted</location>
    </subcellularLocation>
</comment>
<comment type="tissue specificity">
    <text>Expressed by the venom gland.</text>
</comment>
<comment type="similarity">
    <text evidence="4">Belongs to the venom Kunitz-type family.</text>
</comment>
<organism>
    <name type="scientific">Oxyuranus scutellatus scutellatus</name>
    <name type="common">Australian taipan</name>
    <name type="synonym">Coastal taipan</name>
    <dbReference type="NCBI Taxonomy" id="8667"/>
    <lineage>
        <taxon>Eukaryota</taxon>
        <taxon>Metazoa</taxon>
        <taxon>Chordata</taxon>
        <taxon>Craniata</taxon>
        <taxon>Vertebrata</taxon>
        <taxon>Euteleostomi</taxon>
        <taxon>Lepidosauria</taxon>
        <taxon>Squamata</taxon>
        <taxon>Bifurcata</taxon>
        <taxon>Unidentata</taxon>
        <taxon>Episquamata</taxon>
        <taxon>Toxicofera</taxon>
        <taxon>Serpentes</taxon>
        <taxon>Colubroidea</taxon>
        <taxon>Elapidae</taxon>
        <taxon>Hydrophiinae</taxon>
        <taxon>Oxyuranus</taxon>
    </lineage>
</organism>
<reference key="1">
    <citation type="submission" date="2004-05" db="EMBL/GenBank/DDBJ databases">
        <title>Coastal Taipan venom gland cDNA encoding scutellin-1.</title>
        <authorList>
            <person name="Filippovich I."/>
            <person name="Sorokina N.I."/>
        </authorList>
    </citation>
    <scope>NUCLEOTIDE SEQUENCE [MRNA]</scope>
    <source>
        <tissue>Venom gland</tissue>
    </source>
</reference>
<keyword id="KW-1015">Disulfide bond</keyword>
<keyword id="KW-0646">Protease inhibitor</keyword>
<keyword id="KW-0964">Secreted</keyword>
<keyword id="KW-0722">Serine protease inhibitor</keyword>
<keyword id="KW-0732">Signal</keyword>
<feature type="signal peptide" evidence="2">
    <location>
        <begin position="1"/>
        <end position="24"/>
    </location>
</feature>
<feature type="chain" id="PRO_0000376894" description="Kunitz-type serine protease inhibitor scutellin-1">
    <location>
        <begin position="25"/>
        <end position="83"/>
    </location>
</feature>
<feature type="domain" description="BPTI/Kunitz inhibitor" evidence="3">
    <location>
        <begin position="31"/>
        <end position="81"/>
    </location>
</feature>
<feature type="site" description="Reactive bond for trypsin" evidence="1">
    <location>
        <begin position="41"/>
        <end position="42"/>
    </location>
</feature>
<feature type="disulfide bond" evidence="3">
    <location>
        <begin position="31"/>
        <end position="81"/>
    </location>
</feature>
<feature type="disulfide bond" evidence="3">
    <location>
        <begin position="40"/>
        <end position="64"/>
    </location>
</feature>
<feature type="disulfide bond" evidence="3">
    <location>
        <begin position="56"/>
        <end position="77"/>
    </location>
</feature>
<sequence>MSSGGLLLLLGLLTLWEVLTPVSSKDRPDFCELPADTGPCRVGFPSFYYNPDEKKCLEFIYGGCEGSANNFITKEECESTCAA</sequence>
<proteinExistence type="evidence at transcript level"/>
<evidence type="ECO:0000250" key="1"/>
<evidence type="ECO:0000255" key="2"/>
<evidence type="ECO:0000255" key="3">
    <source>
        <dbReference type="PROSITE-ProRule" id="PRU00031"/>
    </source>
</evidence>
<evidence type="ECO:0000305" key="4"/>
<accession>Q6ITB7</accession>
<name>VKT1_OXYSC</name>
<protein>
    <recommendedName>
        <fullName>Kunitz-type serine protease inhibitor scutellin-1</fullName>
    </recommendedName>
</protein>
<dbReference type="EMBL" id="AY626928">
    <property type="protein sequence ID" value="AAT45404.1"/>
    <property type="molecule type" value="mRNA"/>
</dbReference>
<dbReference type="SMR" id="Q6ITB7"/>
<dbReference type="MEROPS" id="I02.052"/>
<dbReference type="GO" id="GO:0005615">
    <property type="term" value="C:extracellular space"/>
    <property type="evidence" value="ECO:0007669"/>
    <property type="project" value="TreeGrafter"/>
</dbReference>
<dbReference type="GO" id="GO:0004867">
    <property type="term" value="F:serine-type endopeptidase inhibitor activity"/>
    <property type="evidence" value="ECO:0007669"/>
    <property type="project" value="UniProtKB-KW"/>
</dbReference>
<dbReference type="CDD" id="cd22594">
    <property type="entry name" value="Kunitz_textilinin-like"/>
    <property type="match status" value="1"/>
</dbReference>
<dbReference type="FunFam" id="4.10.410.10:FF:000021">
    <property type="entry name" value="Serine protease inhibitor, putative"/>
    <property type="match status" value="1"/>
</dbReference>
<dbReference type="Gene3D" id="4.10.410.10">
    <property type="entry name" value="Pancreatic trypsin inhibitor Kunitz domain"/>
    <property type="match status" value="1"/>
</dbReference>
<dbReference type="InterPro" id="IPR002223">
    <property type="entry name" value="Kunitz_BPTI"/>
</dbReference>
<dbReference type="InterPro" id="IPR036880">
    <property type="entry name" value="Kunitz_BPTI_sf"/>
</dbReference>
<dbReference type="InterPro" id="IPR020901">
    <property type="entry name" value="Prtase_inh_Kunz-CS"/>
</dbReference>
<dbReference type="InterPro" id="IPR050098">
    <property type="entry name" value="TFPI/VKTCI-like"/>
</dbReference>
<dbReference type="PANTHER" id="PTHR10083">
    <property type="entry name" value="KUNITZ-TYPE PROTEASE INHIBITOR-RELATED"/>
    <property type="match status" value="1"/>
</dbReference>
<dbReference type="PANTHER" id="PTHR10083:SF376">
    <property type="entry name" value="SERINE PEPTIDASE INHIBITOR, KUNITZ TYPE, 3"/>
    <property type="match status" value="1"/>
</dbReference>
<dbReference type="Pfam" id="PF00014">
    <property type="entry name" value="Kunitz_BPTI"/>
    <property type="match status" value="1"/>
</dbReference>
<dbReference type="PRINTS" id="PR00759">
    <property type="entry name" value="BASICPTASE"/>
</dbReference>
<dbReference type="SMART" id="SM00131">
    <property type="entry name" value="KU"/>
    <property type="match status" value="1"/>
</dbReference>
<dbReference type="SUPFAM" id="SSF57362">
    <property type="entry name" value="BPTI-like"/>
    <property type="match status" value="1"/>
</dbReference>
<dbReference type="PROSITE" id="PS00280">
    <property type="entry name" value="BPTI_KUNITZ_1"/>
    <property type="match status" value="1"/>
</dbReference>
<dbReference type="PROSITE" id="PS50279">
    <property type="entry name" value="BPTI_KUNITZ_2"/>
    <property type="match status" value="1"/>
</dbReference>